<gene>
    <name evidence="1" type="primary">ttcA</name>
    <name type="ordered locus">CbuG_0937</name>
</gene>
<name>TTCA_COXB2</name>
<reference key="1">
    <citation type="journal article" date="2009" name="Infect. Immun.">
        <title>Comparative genomics reveal extensive transposon-mediated genomic plasticity and diversity among potential effector proteins within the genus Coxiella.</title>
        <authorList>
            <person name="Beare P.A."/>
            <person name="Unsworth N."/>
            <person name="Andoh M."/>
            <person name="Voth D.E."/>
            <person name="Omsland A."/>
            <person name="Gilk S.D."/>
            <person name="Williams K.P."/>
            <person name="Sobral B.W."/>
            <person name="Kupko J.J. III"/>
            <person name="Porcella S.F."/>
            <person name="Samuel J.E."/>
            <person name="Heinzen R.A."/>
        </authorList>
    </citation>
    <scope>NUCLEOTIDE SEQUENCE [LARGE SCALE GENOMIC DNA]</scope>
    <source>
        <strain>CbuG_Q212</strain>
    </source>
</reference>
<protein>
    <recommendedName>
        <fullName evidence="1">tRNA-cytidine(32) 2-sulfurtransferase</fullName>
        <ecNumber evidence="1">2.8.1.-</ecNumber>
    </recommendedName>
    <alternativeName>
        <fullName evidence="1">Two-thiocytidine biosynthesis protein A</fullName>
    </alternativeName>
    <alternativeName>
        <fullName evidence="1">tRNA 2-thiocytidine biosynthesis protein TtcA</fullName>
    </alternativeName>
</protein>
<comment type="function">
    <text evidence="1">Catalyzes the ATP-dependent 2-thiolation of cytidine in position 32 of tRNA, to form 2-thiocytidine (s(2)C32). The sulfur atoms are provided by the cysteine/cysteine desulfurase (IscS) system.</text>
</comment>
<comment type="catalytic activity">
    <reaction evidence="1">
        <text>cytidine(32) in tRNA + S-sulfanyl-L-cysteinyl-[cysteine desulfurase] + AH2 + ATP = 2-thiocytidine(32) in tRNA + L-cysteinyl-[cysteine desulfurase] + A + AMP + diphosphate + H(+)</text>
        <dbReference type="Rhea" id="RHEA:57048"/>
        <dbReference type="Rhea" id="RHEA-COMP:10288"/>
        <dbReference type="Rhea" id="RHEA-COMP:12157"/>
        <dbReference type="Rhea" id="RHEA-COMP:12158"/>
        <dbReference type="Rhea" id="RHEA-COMP:14821"/>
        <dbReference type="ChEBI" id="CHEBI:13193"/>
        <dbReference type="ChEBI" id="CHEBI:15378"/>
        <dbReference type="ChEBI" id="CHEBI:17499"/>
        <dbReference type="ChEBI" id="CHEBI:29950"/>
        <dbReference type="ChEBI" id="CHEBI:30616"/>
        <dbReference type="ChEBI" id="CHEBI:33019"/>
        <dbReference type="ChEBI" id="CHEBI:61963"/>
        <dbReference type="ChEBI" id="CHEBI:82748"/>
        <dbReference type="ChEBI" id="CHEBI:141453"/>
        <dbReference type="ChEBI" id="CHEBI:456215"/>
    </reaction>
    <physiologicalReaction direction="left-to-right" evidence="1">
        <dbReference type="Rhea" id="RHEA:57049"/>
    </physiologicalReaction>
</comment>
<comment type="cofactor">
    <cofactor evidence="1">
        <name>Mg(2+)</name>
        <dbReference type="ChEBI" id="CHEBI:18420"/>
    </cofactor>
</comment>
<comment type="cofactor">
    <cofactor evidence="1">
        <name>[4Fe-4S] cluster</name>
        <dbReference type="ChEBI" id="CHEBI:49883"/>
    </cofactor>
    <text evidence="1">Binds 1 [4Fe-4S] cluster per subunit. The cluster is chelated by three Cys residues, the fourth Fe has a free coordination site that may bind a sulfur atom transferred from the persulfide of IscS.</text>
</comment>
<comment type="pathway">
    <text evidence="1">tRNA modification.</text>
</comment>
<comment type="subunit">
    <text evidence="1">Homodimer.</text>
</comment>
<comment type="subcellular location">
    <subcellularLocation>
        <location evidence="1">Cytoplasm</location>
    </subcellularLocation>
</comment>
<comment type="miscellaneous">
    <text evidence="1">The thiolation reaction likely consists of two steps: a first activation step by ATP to form an adenylated intermediate of the target base of tRNA, and a second nucleophilic substitution step of the sulfur (S) atom supplied by the hydrosulfide attached to the Fe-S cluster.</text>
</comment>
<comment type="similarity">
    <text evidence="1">Belongs to the TtcA family.</text>
</comment>
<organism>
    <name type="scientific">Coxiella burnetii (strain CbuG_Q212)</name>
    <name type="common">Coxiella burnetii (strain Q212)</name>
    <dbReference type="NCBI Taxonomy" id="434923"/>
    <lineage>
        <taxon>Bacteria</taxon>
        <taxon>Pseudomonadati</taxon>
        <taxon>Pseudomonadota</taxon>
        <taxon>Gammaproteobacteria</taxon>
        <taxon>Legionellales</taxon>
        <taxon>Coxiellaceae</taxon>
        <taxon>Coxiella</taxon>
    </lineage>
</organism>
<evidence type="ECO:0000255" key="1">
    <source>
        <dbReference type="HAMAP-Rule" id="MF_01850"/>
    </source>
</evidence>
<dbReference type="EC" id="2.8.1.-" evidence="1"/>
<dbReference type="EMBL" id="CP001019">
    <property type="protein sequence ID" value="ACJ18309.1"/>
    <property type="molecule type" value="Genomic_DNA"/>
</dbReference>
<dbReference type="SMR" id="B6J031"/>
<dbReference type="KEGG" id="cbg:CbuG_0937"/>
<dbReference type="HOGENOM" id="CLU_026481_0_0_6"/>
<dbReference type="GO" id="GO:0005737">
    <property type="term" value="C:cytoplasm"/>
    <property type="evidence" value="ECO:0007669"/>
    <property type="project" value="UniProtKB-SubCell"/>
</dbReference>
<dbReference type="GO" id="GO:0051539">
    <property type="term" value="F:4 iron, 4 sulfur cluster binding"/>
    <property type="evidence" value="ECO:0007669"/>
    <property type="project" value="UniProtKB-UniRule"/>
</dbReference>
<dbReference type="GO" id="GO:0005524">
    <property type="term" value="F:ATP binding"/>
    <property type="evidence" value="ECO:0007669"/>
    <property type="project" value="UniProtKB-UniRule"/>
</dbReference>
<dbReference type="GO" id="GO:0000287">
    <property type="term" value="F:magnesium ion binding"/>
    <property type="evidence" value="ECO:0007669"/>
    <property type="project" value="UniProtKB-UniRule"/>
</dbReference>
<dbReference type="GO" id="GO:0016783">
    <property type="term" value="F:sulfurtransferase activity"/>
    <property type="evidence" value="ECO:0007669"/>
    <property type="project" value="UniProtKB-UniRule"/>
</dbReference>
<dbReference type="GO" id="GO:0000049">
    <property type="term" value="F:tRNA binding"/>
    <property type="evidence" value="ECO:0007669"/>
    <property type="project" value="UniProtKB-KW"/>
</dbReference>
<dbReference type="GO" id="GO:0034227">
    <property type="term" value="P:tRNA thio-modification"/>
    <property type="evidence" value="ECO:0007669"/>
    <property type="project" value="UniProtKB-UniRule"/>
</dbReference>
<dbReference type="CDD" id="cd24138">
    <property type="entry name" value="TtcA-like"/>
    <property type="match status" value="1"/>
</dbReference>
<dbReference type="Gene3D" id="3.40.50.620">
    <property type="entry name" value="HUPs"/>
    <property type="match status" value="1"/>
</dbReference>
<dbReference type="HAMAP" id="MF_01850">
    <property type="entry name" value="TtcA"/>
    <property type="match status" value="1"/>
</dbReference>
<dbReference type="InterPro" id="IPR014729">
    <property type="entry name" value="Rossmann-like_a/b/a_fold"/>
</dbReference>
<dbReference type="InterPro" id="IPR011063">
    <property type="entry name" value="TilS/TtcA_N"/>
</dbReference>
<dbReference type="InterPro" id="IPR012089">
    <property type="entry name" value="tRNA_Cyd_32_2_STrfase"/>
</dbReference>
<dbReference type="InterPro" id="IPR035107">
    <property type="entry name" value="tRNA_thiolation_TtcA_Ctu1"/>
</dbReference>
<dbReference type="NCBIfam" id="NF007972">
    <property type="entry name" value="PRK10696.1"/>
    <property type="match status" value="1"/>
</dbReference>
<dbReference type="PANTHER" id="PTHR43686:SF1">
    <property type="entry name" value="AMINOTRAN_5 DOMAIN-CONTAINING PROTEIN"/>
    <property type="match status" value="1"/>
</dbReference>
<dbReference type="PANTHER" id="PTHR43686">
    <property type="entry name" value="SULFURTRANSFERASE-RELATED"/>
    <property type="match status" value="1"/>
</dbReference>
<dbReference type="Pfam" id="PF01171">
    <property type="entry name" value="ATP_bind_3"/>
    <property type="match status" value="1"/>
</dbReference>
<dbReference type="PIRSF" id="PIRSF004976">
    <property type="entry name" value="ATPase_YdaO"/>
    <property type="match status" value="1"/>
</dbReference>
<dbReference type="SUPFAM" id="SSF52402">
    <property type="entry name" value="Adenine nucleotide alpha hydrolases-like"/>
    <property type="match status" value="1"/>
</dbReference>
<sequence>MSEKRVEKKLIHYVKKALNDYRMINTGDRVMVCLSGGKDSYTLLSLLNSIRIEGNYKFDIFAFVLDQSQPGWDDSALRGWLDDKKISYEILTRDTYSIVKEKIPAGKTYCSLCSRLRRGIIYRYAEEQGFSKIALGHHRDDLIQTLLMSVFYNGQIRSMPPKLLSDNKRHVLIRPLAYCQERDIIKYAMEQQFPLIPCNLCGSQKNLMRQRVKRLISDLAKENPKVPSNILRALSNIKPSQLMDHELWNFRELNVD</sequence>
<proteinExistence type="inferred from homology"/>
<keyword id="KW-0004">4Fe-4S</keyword>
<keyword id="KW-0067">ATP-binding</keyword>
<keyword id="KW-0963">Cytoplasm</keyword>
<keyword id="KW-0408">Iron</keyword>
<keyword id="KW-0411">Iron-sulfur</keyword>
<keyword id="KW-0460">Magnesium</keyword>
<keyword id="KW-0479">Metal-binding</keyword>
<keyword id="KW-0547">Nucleotide-binding</keyword>
<keyword id="KW-0694">RNA-binding</keyword>
<keyword id="KW-0808">Transferase</keyword>
<keyword id="KW-0819">tRNA processing</keyword>
<keyword id="KW-0820">tRNA-binding</keyword>
<accession>B6J031</accession>
<feature type="chain" id="PRO_1000188631" description="tRNA-cytidine(32) 2-sulfurtransferase">
    <location>
        <begin position="1"/>
        <end position="256"/>
    </location>
</feature>
<feature type="short sequence motif" description="PP-loop motif" evidence="1">
    <location>
        <begin position="35"/>
        <end position="40"/>
    </location>
</feature>
<feature type="binding site" evidence="1">
    <location>
        <position position="110"/>
    </location>
    <ligand>
        <name>[4Fe-4S] cluster</name>
        <dbReference type="ChEBI" id="CHEBI:49883"/>
    </ligand>
</feature>
<feature type="binding site" evidence="1">
    <location>
        <position position="113"/>
    </location>
    <ligand>
        <name>[4Fe-4S] cluster</name>
        <dbReference type="ChEBI" id="CHEBI:49883"/>
    </ligand>
</feature>
<feature type="binding site" evidence="1">
    <location>
        <position position="201"/>
    </location>
    <ligand>
        <name>[4Fe-4S] cluster</name>
        <dbReference type="ChEBI" id="CHEBI:49883"/>
    </ligand>
</feature>